<comment type="function">
    <text evidence="1">Adapter protein involved in the Toll-like receptor and IL-1 receptor signaling pathway in the innate immune response.</text>
</comment>
<comment type="subcellular location">
    <subcellularLocation>
        <location evidence="1">Cytoplasm</location>
    </subcellularLocation>
</comment>
<comment type="domain">
    <text evidence="1">The intermediate domain (ID) is required for the phosphorylation and activation of IRAK.</text>
</comment>
<dbReference type="EMBL" id="AJ878918">
    <property type="protein sequence ID" value="CAI48087.1"/>
    <property type="molecule type" value="mRNA"/>
</dbReference>
<dbReference type="RefSeq" id="NP_001117893.1">
    <property type="nucleotide sequence ID" value="NM_001124421.1"/>
</dbReference>
<dbReference type="SMR" id="Q4LBC6"/>
<dbReference type="GeneID" id="100136123"/>
<dbReference type="KEGG" id="omy:100136123"/>
<dbReference type="CTD" id="4615"/>
<dbReference type="OrthoDB" id="10037120at2759"/>
<dbReference type="Proteomes" id="UP000694395">
    <property type="component" value="Unplaced"/>
</dbReference>
<dbReference type="GO" id="GO:0005737">
    <property type="term" value="C:cytoplasm"/>
    <property type="evidence" value="ECO:0000314"/>
    <property type="project" value="AgBase"/>
</dbReference>
<dbReference type="GO" id="GO:0016234">
    <property type="term" value="C:inclusion body"/>
    <property type="evidence" value="ECO:0000314"/>
    <property type="project" value="AgBase"/>
</dbReference>
<dbReference type="GO" id="GO:0005634">
    <property type="term" value="C:nucleus"/>
    <property type="evidence" value="ECO:0000314"/>
    <property type="project" value="AgBase"/>
</dbReference>
<dbReference type="GO" id="GO:0005886">
    <property type="term" value="C:plasma membrane"/>
    <property type="evidence" value="ECO:0007669"/>
    <property type="project" value="TreeGrafter"/>
</dbReference>
<dbReference type="GO" id="GO:0070976">
    <property type="term" value="F:TIR domain binding"/>
    <property type="evidence" value="ECO:0007669"/>
    <property type="project" value="InterPro"/>
</dbReference>
<dbReference type="GO" id="GO:0035325">
    <property type="term" value="F:Toll-like receptor binding"/>
    <property type="evidence" value="ECO:0007669"/>
    <property type="project" value="TreeGrafter"/>
</dbReference>
<dbReference type="GO" id="GO:0050830">
    <property type="term" value="P:defense response to Gram-positive bacterium"/>
    <property type="evidence" value="ECO:0007669"/>
    <property type="project" value="TreeGrafter"/>
</dbReference>
<dbReference type="GO" id="GO:0006954">
    <property type="term" value="P:inflammatory response"/>
    <property type="evidence" value="ECO:0007669"/>
    <property type="project" value="UniProtKB-KW"/>
</dbReference>
<dbReference type="GO" id="GO:0045087">
    <property type="term" value="P:innate immune response"/>
    <property type="evidence" value="ECO:0007669"/>
    <property type="project" value="UniProtKB-KW"/>
</dbReference>
<dbReference type="GO" id="GO:0002755">
    <property type="term" value="P:MyD88-dependent toll-like receptor signaling pathway"/>
    <property type="evidence" value="ECO:0007669"/>
    <property type="project" value="InterPro"/>
</dbReference>
<dbReference type="GO" id="GO:0043123">
    <property type="term" value="P:positive regulation of canonical NF-kappaB signal transduction"/>
    <property type="evidence" value="ECO:0007669"/>
    <property type="project" value="InterPro"/>
</dbReference>
<dbReference type="GO" id="GO:0008063">
    <property type="term" value="P:Toll signaling pathway"/>
    <property type="evidence" value="ECO:0007669"/>
    <property type="project" value="TreeGrafter"/>
</dbReference>
<dbReference type="GO" id="GO:0034142">
    <property type="term" value="P:toll-like receptor 4 signaling pathway"/>
    <property type="evidence" value="ECO:0007669"/>
    <property type="project" value="TreeGrafter"/>
</dbReference>
<dbReference type="CDD" id="cd08312">
    <property type="entry name" value="Death_MyD88"/>
    <property type="match status" value="1"/>
</dbReference>
<dbReference type="FunFam" id="1.10.533.10:FF:000029">
    <property type="entry name" value="Myeloid differentiation primary response protein MyD88"/>
    <property type="match status" value="1"/>
</dbReference>
<dbReference type="FunFam" id="3.40.50.10140:FF:000005">
    <property type="entry name" value="Myeloid differentiation primary response protein MyD88"/>
    <property type="match status" value="1"/>
</dbReference>
<dbReference type="Gene3D" id="1.10.533.10">
    <property type="entry name" value="Death Domain, Fas"/>
    <property type="match status" value="1"/>
</dbReference>
<dbReference type="Gene3D" id="3.40.50.10140">
    <property type="entry name" value="Toll/interleukin-1 receptor homology (TIR) domain"/>
    <property type="match status" value="1"/>
</dbReference>
<dbReference type="InterPro" id="IPR011029">
    <property type="entry name" value="DEATH-like_dom_sf"/>
</dbReference>
<dbReference type="InterPro" id="IPR000488">
    <property type="entry name" value="Death_dom"/>
</dbReference>
<dbReference type="InterPro" id="IPR034249">
    <property type="entry name" value="MyD88_Death"/>
</dbReference>
<dbReference type="InterPro" id="IPR017281">
    <property type="entry name" value="Myelin_different_resp_MyD88"/>
</dbReference>
<dbReference type="InterPro" id="IPR000157">
    <property type="entry name" value="TIR_dom"/>
</dbReference>
<dbReference type="InterPro" id="IPR035897">
    <property type="entry name" value="Toll_tir_struct_dom_sf"/>
</dbReference>
<dbReference type="PANTHER" id="PTHR15079">
    <property type="entry name" value="MYD88"/>
    <property type="match status" value="1"/>
</dbReference>
<dbReference type="PANTHER" id="PTHR15079:SF3">
    <property type="entry name" value="MYELOID DIFFERENTIATION PRIMARY RESPONSE PROTEIN MYD88"/>
    <property type="match status" value="1"/>
</dbReference>
<dbReference type="Pfam" id="PF00531">
    <property type="entry name" value="Death"/>
    <property type="match status" value="1"/>
</dbReference>
<dbReference type="Pfam" id="PF13676">
    <property type="entry name" value="TIR_2"/>
    <property type="match status" value="1"/>
</dbReference>
<dbReference type="PIRSF" id="PIRSF037756">
    <property type="entry name" value="MyD88"/>
    <property type="match status" value="1"/>
</dbReference>
<dbReference type="SMART" id="SM00255">
    <property type="entry name" value="TIR"/>
    <property type="match status" value="1"/>
</dbReference>
<dbReference type="SUPFAM" id="SSF47986">
    <property type="entry name" value="DEATH domain"/>
    <property type="match status" value="1"/>
</dbReference>
<dbReference type="SUPFAM" id="SSF52200">
    <property type="entry name" value="Toll/Interleukin receptor TIR domain"/>
    <property type="match status" value="1"/>
</dbReference>
<dbReference type="PROSITE" id="PS50017">
    <property type="entry name" value="DEATH_DOMAIN"/>
    <property type="match status" value="1"/>
</dbReference>
<dbReference type="PROSITE" id="PS50104">
    <property type="entry name" value="TIR"/>
    <property type="match status" value="1"/>
</dbReference>
<feature type="chain" id="PRO_0000393142" description="Myeloid differentiation primary response protein MyD88">
    <location>
        <begin position="1"/>
        <end position="282"/>
    </location>
</feature>
<feature type="domain" description="Death" evidence="2">
    <location>
        <begin position="22"/>
        <end position="99"/>
    </location>
</feature>
<feature type="domain" description="TIR" evidence="3">
    <location>
        <begin position="145"/>
        <end position="279"/>
    </location>
</feature>
<feature type="region of interest" description="Intermediate domain" evidence="1">
    <location>
        <begin position="100"/>
        <end position="141"/>
    </location>
</feature>
<feature type="region of interest" description="Disordered" evidence="4">
    <location>
        <begin position="117"/>
        <end position="138"/>
    </location>
</feature>
<evidence type="ECO:0000250" key="1"/>
<evidence type="ECO:0000255" key="2">
    <source>
        <dbReference type="PROSITE-ProRule" id="PRU00064"/>
    </source>
</evidence>
<evidence type="ECO:0000255" key="3">
    <source>
        <dbReference type="PROSITE-ProRule" id="PRU00204"/>
    </source>
</evidence>
<evidence type="ECO:0000256" key="4">
    <source>
        <dbReference type="SAM" id="MobiDB-lite"/>
    </source>
</evidence>
<protein>
    <recommendedName>
        <fullName>Myeloid differentiation primary response protein MyD88</fullName>
    </recommendedName>
</protein>
<proteinExistence type="evidence at transcript level"/>
<name>MYD88_ONCMY</name>
<reference key="1">
    <citation type="journal article" date="2009" name="Vet. Immunol. Immunopathol.">
        <title>Characterization of two key molecules of teleost innate immunity from rainbow trout (Oncorhynchus mykiss): MyD88 and SAA.</title>
        <authorList>
            <person name="Rebl A."/>
            <person name="Goldammer T."/>
            <person name="Fischer U."/>
            <person name="Kollner B."/>
            <person name="Seyfert H.M."/>
        </authorList>
    </citation>
    <scope>NUCLEOTIDE SEQUENCE [MRNA]</scope>
    <source>
        <tissue>Liver</tissue>
    </source>
</reference>
<sequence length="282" mass="32552">MSASLDLWNIPLRALNINVRKRLGLFLNPRNTVASDWMSVAENMGFSYLEIKNYEDCQDPTRKIYRTGKPLSRAQVGKLVSILDNVTRKDVVEDLRVLIEEDCKRYIERQNEPPVQVPEVDSCVPRTPERQGITLEDDPEGGIPELFDAFICYCQSDFDFVHEMIQQLEQTDHKLKLCVFDRDALPGSCVWTITSELIEKRCKRMVVVISDEYLDSDACDFQTKFALSLCPGARSKRLIPVKYKSMKKPFPSILRFLTVCDYPRPCTQSWFWVRLAKALSLP</sequence>
<gene>
    <name type="primary">myd88</name>
</gene>
<accession>Q4LBC6</accession>
<keyword id="KW-0963">Cytoplasm</keyword>
<keyword id="KW-0391">Immunity</keyword>
<keyword id="KW-0395">Inflammatory response</keyword>
<keyword id="KW-0399">Innate immunity</keyword>
<organism>
    <name type="scientific">Oncorhynchus mykiss</name>
    <name type="common">Rainbow trout</name>
    <name type="synonym">Salmo gairdneri</name>
    <dbReference type="NCBI Taxonomy" id="8022"/>
    <lineage>
        <taxon>Eukaryota</taxon>
        <taxon>Metazoa</taxon>
        <taxon>Chordata</taxon>
        <taxon>Craniata</taxon>
        <taxon>Vertebrata</taxon>
        <taxon>Euteleostomi</taxon>
        <taxon>Actinopterygii</taxon>
        <taxon>Neopterygii</taxon>
        <taxon>Teleostei</taxon>
        <taxon>Protacanthopterygii</taxon>
        <taxon>Salmoniformes</taxon>
        <taxon>Salmonidae</taxon>
        <taxon>Salmoninae</taxon>
        <taxon>Oncorhynchus</taxon>
    </lineage>
</organism>